<evidence type="ECO:0000255" key="1">
    <source>
        <dbReference type="HAMAP-Rule" id="MF_00373"/>
    </source>
</evidence>
<evidence type="ECO:0000305" key="2"/>
<reference key="1">
    <citation type="journal article" date="2004" name="Proc. Natl. Acad. Sci. U.S.A.">
        <title>Genome sequence of the enterobacterial phytopathogen Erwinia carotovora subsp. atroseptica and characterization of virulence factors.</title>
        <authorList>
            <person name="Bell K.S."/>
            <person name="Sebaihia M."/>
            <person name="Pritchard L."/>
            <person name="Holden M.T.G."/>
            <person name="Hyman L.J."/>
            <person name="Holeva M.C."/>
            <person name="Thomson N.R."/>
            <person name="Bentley S.D."/>
            <person name="Churcher L.J.C."/>
            <person name="Mungall K."/>
            <person name="Atkin R."/>
            <person name="Bason N."/>
            <person name="Brooks K."/>
            <person name="Chillingworth T."/>
            <person name="Clark K."/>
            <person name="Doggett J."/>
            <person name="Fraser A."/>
            <person name="Hance Z."/>
            <person name="Hauser H."/>
            <person name="Jagels K."/>
            <person name="Moule S."/>
            <person name="Norbertczak H."/>
            <person name="Ormond D."/>
            <person name="Price C."/>
            <person name="Quail M.A."/>
            <person name="Sanders M."/>
            <person name="Walker D."/>
            <person name="Whitehead S."/>
            <person name="Salmond G.P.C."/>
            <person name="Birch P.R.J."/>
            <person name="Parkhill J."/>
            <person name="Toth I.K."/>
        </authorList>
    </citation>
    <scope>NUCLEOTIDE SEQUENCE [LARGE SCALE GENOMIC DNA]</scope>
    <source>
        <strain>SCRI 1043 / ATCC BAA-672</strain>
    </source>
</reference>
<protein>
    <recommendedName>
        <fullName evidence="1">Large ribosomal subunit protein bL28</fullName>
    </recommendedName>
    <alternativeName>
        <fullName evidence="2">50S ribosomal protein L28</fullName>
    </alternativeName>
</protein>
<dbReference type="EMBL" id="BX950851">
    <property type="protein sequence ID" value="CAG73066.1"/>
    <property type="molecule type" value="Genomic_DNA"/>
</dbReference>
<dbReference type="RefSeq" id="WP_011091787.1">
    <property type="nucleotide sequence ID" value="NC_004547.2"/>
</dbReference>
<dbReference type="SMR" id="Q6DAV6"/>
<dbReference type="STRING" id="218491.ECA0146"/>
<dbReference type="GeneID" id="57207005"/>
<dbReference type="KEGG" id="eca:ECA0146"/>
<dbReference type="PATRIC" id="fig|218491.5.peg.148"/>
<dbReference type="eggNOG" id="COG0227">
    <property type="taxonomic scope" value="Bacteria"/>
</dbReference>
<dbReference type="HOGENOM" id="CLU_064548_3_1_6"/>
<dbReference type="OrthoDB" id="9805609at2"/>
<dbReference type="Proteomes" id="UP000007966">
    <property type="component" value="Chromosome"/>
</dbReference>
<dbReference type="GO" id="GO:0022625">
    <property type="term" value="C:cytosolic large ribosomal subunit"/>
    <property type="evidence" value="ECO:0007669"/>
    <property type="project" value="TreeGrafter"/>
</dbReference>
<dbReference type="GO" id="GO:0003735">
    <property type="term" value="F:structural constituent of ribosome"/>
    <property type="evidence" value="ECO:0007669"/>
    <property type="project" value="InterPro"/>
</dbReference>
<dbReference type="GO" id="GO:0006412">
    <property type="term" value="P:translation"/>
    <property type="evidence" value="ECO:0007669"/>
    <property type="project" value="UniProtKB-UniRule"/>
</dbReference>
<dbReference type="FunFam" id="2.30.170.40:FF:000001">
    <property type="entry name" value="50S ribosomal protein L28"/>
    <property type="match status" value="1"/>
</dbReference>
<dbReference type="Gene3D" id="2.30.170.40">
    <property type="entry name" value="Ribosomal protein L28/L24"/>
    <property type="match status" value="1"/>
</dbReference>
<dbReference type="HAMAP" id="MF_00373">
    <property type="entry name" value="Ribosomal_bL28"/>
    <property type="match status" value="1"/>
</dbReference>
<dbReference type="InterPro" id="IPR026569">
    <property type="entry name" value="Ribosomal_bL28"/>
</dbReference>
<dbReference type="InterPro" id="IPR034704">
    <property type="entry name" value="Ribosomal_bL28/bL31-like_sf"/>
</dbReference>
<dbReference type="InterPro" id="IPR001383">
    <property type="entry name" value="Ribosomal_bL28_bact-type"/>
</dbReference>
<dbReference type="InterPro" id="IPR037147">
    <property type="entry name" value="Ribosomal_bL28_sf"/>
</dbReference>
<dbReference type="NCBIfam" id="TIGR00009">
    <property type="entry name" value="L28"/>
    <property type="match status" value="1"/>
</dbReference>
<dbReference type="PANTHER" id="PTHR13528">
    <property type="entry name" value="39S RIBOSOMAL PROTEIN L28, MITOCHONDRIAL"/>
    <property type="match status" value="1"/>
</dbReference>
<dbReference type="PANTHER" id="PTHR13528:SF2">
    <property type="entry name" value="LARGE RIBOSOMAL SUBUNIT PROTEIN BL28M"/>
    <property type="match status" value="1"/>
</dbReference>
<dbReference type="Pfam" id="PF00830">
    <property type="entry name" value="Ribosomal_L28"/>
    <property type="match status" value="1"/>
</dbReference>
<dbReference type="SUPFAM" id="SSF143800">
    <property type="entry name" value="L28p-like"/>
    <property type="match status" value="1"/>
</dbReference>
<comment type="similarity">
    <text evidence="1">Belongs to the bacterial ribosomal protein bL28 family.</text>
</comment>
<gene>
    <name evidence="1" type="primary">rpmB</name>
    <name type="ordered locus">ECA0146</name>
</gene>
<sequence>MSRVCQVTGKRPVAGNNRSHALNATKRRFLPNLHSHRFWVEGEKRFVTLRVSAKGMRVIDKKGIETVLADLRTRGEKY</sequence>
<organism>
    <name type="scientific">Pectobacterium atrosepticum (strain SCRI 1043 / ATCC BAA-672)</name>
    <name type="common">Erwinia carotovora subsp. atroseptica</name>
    <dbReference type="NCBI Taxonomy" id="218491"/>
    <lineage>
        <taxon>Bacteria</taxon>
        <taxon>Pseudomonadati</taxon>
        <taxon>Pseudomonadota</taxon>
        <taxon>Gammaproteobacteria</taxon>
        <taxon>Enterobacterales</taxon>
        <taxon>Pectobacteriaceae</taxon>
        <taxon>Pectobacterium</taxon>
    </lineage>
</organism>
<proteinExistence type="inferred from homology"/>
<accession>Q6DAV6</accession>
<keyword id="KW-1185">Reference proteome</keyword>
<keyword id="KW-0687">Ribonucleoprotein</keyword>
<keyword id="KW-0689">Ribosomal protein</keyword>
<feature type="chain" id="PRO_0000178472" description="Large ribosomal subunit protein bL28">
    <location>
        <begin position="1"/>
        <end position="78"/>
    </location>
</feature>
<name>RL28_PECAS</name>